<evidence type="ECO:0000255" key="1">
    <source>
        <dbReference type="HAMAP-Rule" id="MF_00658"/>
    </source>
</evidence>
<feature type="chain" id="PRO_0000198145" description="Ribosomal RNA large subunit methyltransferase H">
    <location>
        <begin position="1"/>
        <end position="143"/>
    </location>
</feature>
<feature type="binding site" evidence="1">
    <location>
        <position position="68"/>
    </location>
    <ligand>
        <name>S-adenosyl-L-methionine</name>
        <dbReference type="ChEBI" id="CHEBI:59789"/>
    </ligand>
</feature>
<feature type="binding site" evidence="1">
    <location>
        <position position="95"/>
    </location>
    <ligand>
        <name>S-adenosyl-L-methionine</name>
        <dbReference type="ChEBI" id="CHEBI:59789"/>
    </ligand>
</feature>
<dbReference type="EC" id="2.1.1.177" evidence="1"/>
<dbReference type="EMBL" id="AE017308">
    <property type="protein sequence ID" value="AAT27641.1"/>
    <property type="molecule type" value="Genomic_DNA"/>
</dbReference>
<dbReference type="RefSeq" id="WP_011264675.1">
    <property type="nucleotide sequence ID" value="NC_006908.1"/>
</dbReference>
<dbReference type="SMR" id="Q6KID5"/>
<dbReference type="STRING" id="267748.MMOB1550"/>
<dbReference type="KEGG" id="mmo:MMOB1550"/>
<dbReference type="eggNOG" id="COG1576">
    <property type="taxonomic scope" value="Bacteria"/>
</dbReference>
<dbReference type="HOGENOM" id="CLU_100552_2_0_14"/>
<dbReference type="OrthoDB" id="9806643at2"/>
<dbReference type="Proteomes" id="UP000009072">
    <property type="component" value="Chromosome"/>
</dbReference>
<dbReference type="GO" id="GO:0005737">
    <property type="term" value="C:cytoplasm"/>
    <property type="evidence" value="ECO:0007669"/>
    <property type="project" value="UniProtKB-SubCell"/>
</dbReference>
<dbReference type="GO" id="GO:0070038">
    <property type="term" value="F:rRNA (pseudouridine-N3-)-methyltransferase activity"/>
    <property type="evidence" value="ECO:0007669"/>
    <property type="project" value="UniProtKB-UniRule"/>
</dbReference>
<dbReference type="CDD" id="cd18081">
    <property type="entry name" value="RlmH-like"/>
    <property type="match status" value="1"/>
</dbReference>
<dbReference type="Gene3D" id="3.40.1280.10">
    <property type="match status" value="1"/>
</dbReference>
<dbReference type="HAMAP" id="MF_00658">
    <property type="entry name" value="23SrRNA_methyltr_H"/>
    <property type="match status" value="1"/>
</dbReference>
<dbReference type="InterPro" id="IPR029028">
    <property type="entry name" value="Alpha/beta_knot_MTases"/>
</dbReference>
<dbReference type="InterPro" id="IPR003742">
    <property type="entry name" value="RlmH-like"/>
</dbReference>
<dbReference type="InterPro" id="IPR029026">
    <property type="entry name" value="tRNA_m1G_MTases_N"/>
</dbReference>
<dbReference type="PANTHER" id="PTHR33603">
    <property type="entry name" value="METHYLTRANSFERASE"/>
    <property type="match status" value="1"/>
</dbReference>
<dbReference type="PANTHER" id="PTHR33603:SF1">
    <property type="entry name" value="RIBOSOMAL RNA LARGE SUBUNIT METHYLTRANSFERASE H"/>
    <property type="match status" value="1"/>
</dbReference>
<dbReference type="Pfam" id="PF02590">
    <property type="entry name" value="SPOUT_MTase"/>
    <property type="match status" value="1"/>
</dbReference>
<dbReference type="PIRSF" id="PIRSF004505">
    <property type="entry name" value="MT_bac"/>
    <property type="match status" value="1"/>
</dbReference>
<dbReference type="SUPFAM" id="SSF75217">
    <property type="entry name" value="alpha/beta knot"/>
    <property type="match status" value="1"/>
</dbReference>
<name>RLMH_MYCM1</name>
<comment type="function">
    <text evidence="1">Specifically methylates the pseudouridine at position 1915 (m3Psi1915) in 23S rRNA.</text>
</comment>
<comment type="catalytic activity">
    <reaction evidence="1">
        <text>pseudouridine(1915) in 23S rRNA + S-adenosyl-L-methionine = N(3)-methylpseudouridine(1915) in 23S rRNA + S-adenosyl-L-homocysteine + H(+)</text>
        <dbReference type="Rhea" id="RHEA:42752"/>
        <dbReference type="Rhea" id="RHEA-COMP:10221"/>
        <dbReference type="Rhea" id="RHEA-COMP:10222"/>
        <dbReference type="ChEBI" id="CHEBI:15378"/>
        <dbReference type="ChEBI" id="CHEBI:57856"/>
        <dbReference type="ChEBI" id="CHEBI:59789"/>
        <dbReference type="ChEBI" id="CHEBI:65314"/>
        <dbReference type="ChEBI" id="CHEBI:74486"/>
        <dbReference type="EC" id="2.1.1.177"/>
    </reaction>
</comment>
<comment type="subunit">
    <text evidence="1">Homodimer.</text>
</comment>
<comment type="subcellular location">
    <subcellularLocation>
        <location evidence="1">Cytoplasm</location>
    </subcellularLocation>
</comment>
<comment type="similarity">
    <text evidence="1">Belongs to the RNA methyltransferase RlmH family.</text>
</comment>
<gene>
    <name evidence="1" type="primary">rlmH</name>
    <name type="ordered locus">MMOB1550</name>
</gene>
<proteinExistence type="inferred from homology"/>
<keyword id="KW-0963">Cytoplasm</keyword>
<keyword id="KW-0489">Methyltransferase</keyword>
<keyword id="KW-1185">Reference proteome</keyword>
<keyword id="KW-0698">rRNA processing</keyword>
<keyword id="KW-0949">S-adenosyl-L-methionine</keyword>
<keyword id="KW-0808">Transferase</keyword>
<accession>Q6KID5</accession>
<organism>
    <name type="scientific">Mycoplasma mobile (strain ATCC 43663 / 163K / NCTC 11711)</name>
    <name type="common">Mesomycoplasma mobile</name>
    <dbReference type="NCBI Taxonomy" id="267748"/>
    <lineage>
        <taxon>Bacteria</taxon>
        <taxon>Bacillati</taxon>
        <taxon>Mycoplasmatota</taxon>
        <taxon>Mycoplasmoidales</taxon>
        <taxon>Metamycoplasmataceae</taxon>
        <taxon>Mesomycoplasma</taxon>
    </lineage>
</organism>
<protein>
    <recommendedName>
        <fullName evidence="1">Ribosomal RNA large subunit methyltransferase H</fullName>
        <ecNumber evidence="1">2.1.1.177</ecNumber>
    </recommendedName>
    <alternativeName>
        <fullName evidence="1">23S rRNA (pseudouridine1915-N3)-methyltransferase</fullName>
    </alternativeName>
    <alternativeName>
        <fullName evidence="1">23S rRNA m3Psi1915 methyltransferase</fullName>
    </alternativeName>
    <alternativeName>
        <fullName evidence="1">rRNA (pseudouridine-N3-)-methyltransferase RlmH</fullName>
    </alternativeName>
</protein>
<sequence>MKINLIAVGKLEKEYLNLYLSYLKKISFFATINLIEIKEINEKNIDLKKQKETELIIEKIPKNSKVYLCSLQGQEKTSEDFSLLFNEDNLTFVIGGSNGVDESTFLHKISFSKNTFPHQLFRILLVEQIYRSFTILKGIKYHK</sequence>
<reference key="1">
    <citation type="journal article" date="2004" name="Genome Res.">
        <title>The complete genome and proteome of Mycoplasma mobile.</title>
        <authorList>
            <person name="Jaffe J.D."/>
            <person name="Stange-Thomann N."/>
            <person name="Smith C."/>
            <person name="DeCaprio D."/>
            <person name="Fisher S."/>
            <person name="Butler J."/>
            <person name="Calvo S."/>
            <person name="Elkins T."/>
            <person name="FitzGerald M.G."/>
            <person name="Hafez N."/>
            <person name="Kodira C.D."/>
            <person name="Major J."/>
            <person name="Wang S."/>
            <person name="Wilkinson J."/>
            <person name="Nicol R."/>
            <person name="Nusbaum C."/>
            <person name="Birren B."/>
            <person name="Berg H.C."/>
            <person name="Church G.M."/>
        </authorList>
    </citation>
    <scope>NUCLEOTIDE SEQUENCE [LARGE SCALE GENOMIC DNA]</scope>
    <source>
        <strain>ATCC 43663 / NCTC 11711 / 163 K</strain>
    </source>
</reference>